<dbReference type="EMBL" id="BC086285">
    <property type="protein sequence ID" value="AAH86285.1"/>
    <property type="molecule type" value="mRNA"/>
</dbReference>
<dbReference type="RefSeq" id="NP_001088639.1">
    <property type="nucleotide sequence ID" value="NM_001095170.1"/>
</dbReference>
<dbReference type="SMR" id="Q5U245"/>
<dbReference type="GeneID" id="495691"/>
<dbReference type="KEGG" id="xla:495691"/>
<dbReference type="AGR" id="Xenbase:XB-GENE-990027"/>
<dbReference type="CTD" id="495691"/>
<dbReference type="Xenbase" id="XB-GENE-990027">
    <property type="gene designation" value="armc9.L"/>
</dbReference>
<dbReference type="OrthoDB" id="538223at2759"/>
<dbReference type="Proteomes" id="UP000186698">
    <property type="component" value="Chromosome 5L"/>
</dbReference>
<dbReference type="Bgee" id="495691">
    <property type="expression patterns" value="Expressed in egg cell and 19 other cell types or tissues"/>
</dbReference>
<dbReference type="GO" id="GO:0005814">
    <property type="term" value="C:centriole"/>
    <property type="evidence" value="ECO:0000250"/>
    <property type="project" value="UniProtKB"/>
</dbReference>
<dbReference type="GO" id="GO:0036064">
    <property type="term" value="C:ciliary basal body"/>
    <property type="evidence" value="ECO:0000250"/>
    <property type="project" value="UniProtKB"/>
</dbReference>
<dbReference type="GO" id="GO:0097542">
    <property type="term" value="C:ciliary tip"/>
    <property type="evidence" value="ECO:0000250"/>
    <property type="project" value="UniProtKB"/>
</dbReference>
<dbReference type="GO" id="GO:0005929">
    <property type="term" value="C:cilium"/>
    <property type="evidence" value="ECO:0000250"/>
    <property type="project" value="UniProtKB"/>
</dbReference>
<dbReference type="GO" id="GO:0005737">
    <property type="term" value="C:cytoplasm"/>
    <property type="evidence" value="ECO:0007669"/>
    <property type="project" value="UniProtKB-KW"/>
</dbReference>
<dbReference type="GO" id="GO:0060271">
    <property type="term" value="P:cilium assembly"/>
    <property type="evidence" value="ECO:0000250"/>
    <property type="project" value="UniProtKB"/>
</dbReference>
<dbReference type="GO" id="GO:0045880">
    <property type="term" value="P:positive regulation of smoothened signaling pathway"/>
    <property type="evidence" value="ECO:0000250"/>
    <property type="project" value="UniProtKB"/>
</dbReference>
<dbReference type="FunFam" id="1.25.10.10:FF:000124">
    <property type="entry name" value="lisH domain-containing protein ARMC9 isoform X1"/>
    <property type="match status" value="1"/>
</dbReference>
<dbReference type="Gene3D" id="1.25.10.10">
    <property type="entry name" value="Leucine-rich Repeat Variant"/>
    <property type="match status" value="1"/>
</dbReference>
<dbReference type="InterPro" id="IPR011989">
    <property type="entry name" value="ARM-like"/>
</dbReference>
<dbReference type="InterPro" id="IPR016024">
    <property type="entry name" value="ARM-type_fold"/>
</dbReference>
<dbReference type="InterPro" id="IPR040369">
    <property type="entry name" value="ARMC9"/>
</dbReference>
<dbReference type="InterPro" id="IPR048959">
    <property type="entry name" value="ARMC9_ARM_dom"/>
</dbReference>
<dbReference type="InterPro" id="IPR056327">
    <property type="entry name" value="ARMC9_CTLH-like_dom"/>
</dbReference>
<dbReference type="InterPro" id="IPR048957">
    <property type="entry name" value="ARMC9_LisH"/>
</dbReference>
<dbReference type="InterPro" id="IPR006594">
    <property type="entry name" value="LisH"/>
</dbReference>
<dbReference type="PANTHER" id="PTHR14881">
    <property type="entry name" value="LISH DOMAIN-CONTAINING PROTEIN ARMC9"/>
    <property type="match status" value="1"/>
</dbReference>
<dbReference type="PANTHER" id="PTHR14881:SF4">
    <property type="entry name" value="LISH DOMAIN-CONTAINING PROTEIN ARMC9"/>
    <property type="match status" value="1"/>
</dbReference>
<dbReference type="Pfam" id="PF21050">
    <property type="entry name" value="ARMC9_ARM"/>
    <property type="match status" value="1"/>
</dbReference>
<dbReference type="Pfam" id="PF21051">
    <property type="entry name" value="ARMC9_LisH"/>
    <property type="match status" value="1"/>
</dbReference>
<dbReference type="Pfam" id="PF23138">
    <property type="entry name" value="CTLH_Armc9"/>
    <property type="match status" value="1"/>
</dbReference>
<dbReference type="SUPFAM" id="SSF48371">
    <property type="entry name" value="ARM repeat"/>
    <property type="match status" value="1"/>
</dbReference>
<dbReference type="PROSITE" id="PS50896">
    <property type="entry name" value="LISH"/>
    <property type="match status" value="1"/>
</dbReference>
<sequence length="806" mass="91493">MGDILAYEADLLGLVKEFLNFGEFQETLECFSKECKIKGKLLPRTSGSSLRESKTLLIQKDLITAFEDGDIKEFFALWQEHIPVETQNTNPVAQKLEFYLQIHFAIFPLKQSQGRIDRVDCEERISHFKTYLETSGAALSQTTEFLPFYALPFVPNPAAHPSFKEIFQESWEAELKMRLEKFLSVILKAASTPKLITLYKESLHNNQEQLQQLQQQLMETEHKARTYKKCFNKMQSDYHNLIGVTADLVDSLEATINGKLITPEYLQSVCTRLFSAQMKQSSAQSIDFTRPGTASSMLRASIAPLKQQEVPLFPSLDYEKLKKDLVFGNDRLKAFILQALRWRLTRSQPGEQRNTVLQAYISNDLLDCQHNEQKNVLILLRSPSEVVRQYTALLIDVCASLGYGRVYLSQNPRLLHSLVEAWKAEEKESIARETVLGILQKLSLRRSMQSAMIKDDLIFWLVRELEDPDHLSDYALQYTIALFMNLCLRTAGRKLCSRDADHVLKVLSDLLGHENHEIRSYVNGALYSILAVPSIREEARSMGMEEILRWYIREGNPDMNCHIEFIIRQLNSEDKFDESVESDDEEEEKDDEEDEDALEADLDKDEIIHAQSGELSGEKLLTTDYLGIMTNSFKVKKRMFAGILQSADEPLQRPVTPSSHRAMNTVRKNSNSPSPLTNTFKSSQANKMSLSSSRPPTRSGSRASSSDSIDSEASRLFSPNSLTDHRGAMSPTSPRILDLGMEKNIVQNSSKAWLPRSPEVQNATSRKTRTPTIAPQFSQSGPQQTSYSSSAGSSTRSRQSTQSYRK</sequence>
<reference key="1">
    <citation type="submission" date="2004-11" db="EMBL/GenBank/DDBJ databases">
        <authorList>
            <consortium name="NIH - Xenopus Gene Collection (XGC) project"/>
        </authorList>
    </citation>
    <scope>NUCLEOTIDE SEQUENCE [LARGE SCALE MRNA]</scope>
    <source>
        <tissue>Oocyte</tissue>
    </source>
</reference>
<organism>
    <name type="scientific">Xenopus laevis</name>
    <name type="common">African clawed frog</name>
    <dbReference type="NCBI Taxonomy" id="8355"/>
    <lineage>
        <taxon>Eukaryota</taxon>
        <taxon>Metazoa</taxon>
        <taxon>Chordata</taxon>
        <taxon>Craniata</taxon>
        <taxon>Vertebrata</taxon>
        <taxon>Euteleostomi</taxon>
        <taxon>Amphibia</taxon>
        <taxon>Batrachia</taxon>
        <taxon>Anura</taxon>
        <taxon>Pipoidea</taxon>
        <taxon>Pipidae</taxon>
        <taxon>Xenopodinae</taxon>
        <taxon>Xenopus</taxon>
        <taxon>Xenopus</taxon>
    </lineage>
</organism>
<name>ARMC9_XENLA</name>
<evidence type="ECO:0000250" key="1">
    <source>
        <dbReference type="UniProtKB" id="E7F187"/>
    </source>
</evidence>
<evidence type="ECO:0000250" key="2">
    <source>
        <dbReference type="UniProtKB" id="Q7Z3E5"/>
    </source>
</evidence>
<evidence type="ECO:0000250" key="3">
    <source>
        <dbReference type="UniProtKB" id="Q9D2I5"/>
    </source>
</evidence>
<evidence type="ECO:0000255" key="4"/>
<evidence type="ECO:0000255" key="5">
    <source>
        <dbReference type="PROSITE-ProRule" id="PRU00126"/>
    </source>
</evidence>
<evidence type="ECO:0000256" key="6">
    <source>
        <dbReference type="SAM" id="MobiDB-lite"/>
    </source>
</evidence>
<accession>Q5U245</accession>
<proteinExistence type="evidence at transcript level"/>
<feature type="chain" id="PRO_0000280599" description="LisH domain-containing protein ARMC9">
    <location>
        <begin position="1"/>
        <end position="806"/>
    </location>
</feature>
<feature type="domain" description="LisH" evidence="5">
    <location>
        <begin position="7"/>
        <end position="39"/>
    </location>
</feature>
<feature type="region of interest" description="Disordered" evidence="6">
    <location>
        <begin position="576"/>
        <end position="604"/>
    </location>
</feature>
<feature type="region of interest" description="Disordered" evidence="6">
    <location>
        <begin position="650"/>
        <end position="736"/>
    </location>
</feature>
<feature type="region of interest" description="Disordered" evidence="6">
    <location>
        <begin position="748"/>
        <end position="806"/>
    </location>
</feature>
<feature type="coiled-coil region" evidence="4">
    <location>
        <begin position="194"/>
        <end position="230"/>
    </location>
</feature>
<feature type="compositionally biased region" description="Acidic residues" evidence="6">
    <location>
        <begin position="579"/>
        <end position="604"/>
    </location>
</feature>
<feature type="compositionally biased region" description="Polar residues" evidence="6">
    <location>
        <begin position="655"/>
        <end position="688"/>
    </location>
</feature>
<feature type="compositionally biased region" description="Low complexity" evidence="6">
    <location>
        <begin position="689"/>
        <end position="708"/>
    </location>
</feature>
<feature type="compositionally biased region" description="Polar residues" evidence="6">
    <location>
        <begin position="759"/>
        <end position="782"/>
    </location>
</feature>
<feature type="compositionally biased region" description="Low complexity" evidence="6">
    <location>
        <begin position="783"/>
        <end position="806"/>
    </location>
</feature>
<keyword id="KW-0966">Cell projection</keyword>
<keyword id="KW-0970">Cilium biogenesis/degradation</keyword>
<keyword id="KW-0175">Coiled coil</keyword>
<keyword id="KW-0963">Cytoplasm</keyword>
<keyword id="KW-0206">Cytoskeleton</keyword>
<keyword id="KW-1185">Reference proteome</keyword>
<comment type="function">
    <text evidence="1 2 3">Involved in ciliogenesis. It is required for appropriate acetylation and polyglutamylation of ciliary microtubules, and regulation of cilium length (By similarity). Acts as a positive regulator of hedgehog (Hh)signaling (By similarity).</text>
</comment>
<comment type="subcellular location">
    <subcellularLocation>
        <location evidence="2">Cytoplasm</location>
        <location evidence="2">Cytoskeleton</location>
        <location evidence="2">Cilium basal body</location>
    </subcellularLocation>
    <subcellularLocation>
        <location evidence="3">Cell projection</location>
        <location evidence="3">Cilium</location>
    </subcellularLocation>
    <subcellularLocation>
        <location evidence="2">Cytoplasm</location>
        <location evidence="2">Cytoskeleton</location>
        <location evidence="2">Microtubule organizing center</location>
        <location evidence="2">Centrosome</location>
        <location evidence="2">Centriole</location>
    </subcellularLocation>
    <text evidence="2 3">Localized to the proximal region in cilia. Stimulation of Hh signaling leads to redistribution of ARMC9 toward the ciliary tip within 6 hours, follow by a gradual return to its original proximal location (By similarity). Localizes to the daughter centriole of the primary cilium in RPE1 cells (By similarity).</text>
</comment>
<protein>
    <recommendedName>
        <fullName>LisH domain-containing protein ARMC9</fullName>
    </recommendedName>
</protein>
<gene>
    <name type="primary">armc9</name>
</gene>